<protein>
    <recommendedName>
        <fullName evidence="1">Probable GTP-binding protein EngB</fullName>
    </recommendedName>
</protein>
<name>ENGB_SHEPW</name>
<gene>
    <name evidence="1" type="primary">engB</name>
    <name type="ordered locus">swp_5074.1</name>
    <name type="ORF">swp_5074a</name>
</gene>
<comment type="function">
    <text evidence="1">Necessary for normal cell division and for the maintenance of normal septation.</text>
</comment>
<comment type="cofactor">
    <cofactor evidence="1">
        <name>Mg(2+)</name>
        <dbReference type="ChEBI" id="CHEBI:18420"/>
    </cofactor>
</comment>
<comment type="similarity">
    <text evidence="1">Belongs to the TRAFAC class TrmE-Era-EngA-EngB-Septin-like GTPase superfamily. EngB GTPase family.</text>
</comment>
<evidence type="ECO:0000255" key="1">
    <source>
        <dbReference type="HAMAP-Rule" id="MF_00321"/>
    </source>
</evidence>
<organism>
    <name type="scientific">Shewanella piezotolerans (strain WP3 / JCM 13877)</name>
    <dbReference type="NCBI Taxonomy" id="225849"/>
    <lineage>
        <taxon>Bacteria</taxon>
        <taxon>Pseudomonadati</taxon>
        <taxon>Pseudomonadota</taxon>
        <taxon>Gammaproteobacteria</taxon>
        <taxon>Alteromonadales</taxon>
        <taxon>Shewanellaceae</taxon>
        <taxon>Shewanella</taxon>
    </lineage>
</organism>
<reference key="1">
    <citation type="journal article" date="2008" name="PLoS ONE">
        <title>Environmental adaptation: genomic analysis of the piezotolerant and psychrotolerant deep-sea iron reducing bacterium Shewanella piezotolerans WP3.</title>
        <authorList>
            <person name="Wang F."/>
            <person name="Wang J."/>
            <person name="Jian H."/>
            <person name="Zhang B."/>
            <person name="Li S."/>
            <person name="Wang F."/>
            <person name="Zeng X."/>
            <person name="Gao L."/>
            <person name="Bartlett D.H."/>
            <person name="Yu J."/>
            <person name="Hu S."/>
            <person name="Xiao X."/>
        </authorList>
    </citation>
    <scope>NUCLEOTIDE SEQUENCE [LARGE SCALE GENOMIC DNA]</scope>
    <source>
        <strain>WP3 / JCM 13877</strain>
    </source>
</reference>
<dbReference type="EMBL" id="CP000472">
    <property type="protein sequence ID" value="ACJ31689.1"/>
    <property type="molecule type" value="Genomic_DNA"/>
</dbReference>
<dbReference type="RefSeq" id="WP_020915016.1">
    <property type="nucleotide sequence ID" value="NC_011566.1"/>
</dbReference>
<dbReference type="SMR" id="B8CVL3"/>
<dbReference type="STRING" id="225849.swp_5074a"/>
<dbReference type="KEGG" id="swp:swp_5074a"/>
<dbReference type="eggNOG" id="COG0218">
    <property type="taxonomic scope" value="Bacteria"/>
</dbReference>
<dbReference type="HOGENOM" id="CLU_033732_1_2_6"/>
<dbReference type="OrthoDB" id="9804921at2"/>
<dbReference type="Proteomes" id="UP000000753">
    <property type="component" value="Chromosome"/>
</dbReference>
<dbReference type="GO" id="GO:0005829">
    <property type="term" value="C:cytosol"/>
    <property type="evidence" value="ECO:0007669"/>
    <property type="project" value="TreeGrafter"/>
</dbReference>
<dbReference type="GO" id="GO:0005525">
    <property type="term" value="F:GTP binding"/>
    <property type="evidence" value="ECO:0007669"/>
    <property type="project" value="UniProtKB-UniRule"/>
</dbReference>
<dbReference type="GO" id="GO:0046872">
    <property type="term" value="F:metal ion binding"/>
    <property type="evidence" value="ECO:0007669"/>
    <property type="project" value="UniProtKB-KW"/>
</dbReference>
<dbReference type="GO" id="GO:0000917">
    <property type="term" value="P:division septum assembly"/>
    <property type="evidence" value="ECO:0007669"/>
    <property type="project" value="UniProtKB-KW"/>
</dbReference>
<dbReference type="CDD" id="cd01876">
    <property type="entry name" value="YihA_EngB"/>
    <property type="match status" value="1"/>
</dbReference>
<dbReference type="FunFam" id="3.40.50.300:FF:000098">
    <property type="entry name" value="Probable GTP-binding protein EngB"/>
    <property type="match status" value="1"/>
</dbReference>
<dbReference type="Gene3D" id="3.40.50.300">
    <property type="entry name" value="P-loop containing nucleotide triphosphate hydrolases"/>
    <property type="match status" value="1"/>
</dbReference>
<dbReference type="HAMAP" id="MF_00321">
    <property type="entry name" value="GTPase_EngB"/>
    <property type="match status" value="1"/>
</dbReference>
<dbReference type="InterPro" id="IPR030393">
    <property type="entry name" value="G_ENGB_dom"/>
</dbReference>
<dbReference type="InterPro" id="IPR006073">
    <property type="entry name" value="GTP-bd"/>
</dbReference>
<dbReference type="InterPro" id="IPR019987">
    <property type="entry name" value="GTP-bd_ribosome_bio_YsxC"/>
</dbReference>
<dbReference type="InterPro" id="IPR027417">
    <property type="entry name" value="P-loop_NTPase"/>
</dbReference>
<dbReference type="NCBIfam" id="TIGR03598">
    <property type="entry name" value="GTPase_YsxC"/>
    <property type="match status" value="1"/>
</dbReference>
<dbReference type="PANTHER" id="PTHR11649:SF13">
    <property type="entry name" value="ENGB-TYPE G DOMAIN-CONTAINING PROTEIN"/>
    <property type="match status" value="1"/>
</dbReference>
<dbReference type="PANTHER" id="PTHR11649">
    <property type="entry name" value="MSS1/TRME-RELATED GTP-BINDING PROTEIN"/>
    <property type="match status" value="1"/>
</dbReference>
<dbReference type="Pfam" id="PF01926">
    <property type="entry name" value="MMR_HSR1"/>
    <property type="match status" value="1"/>
</dbReference>
<dbReference type="SUPFAM" id="SSF52540">
    <property type="entry name" value="P-loop containing nucleoside triphosphate hydrolases"/>
    <property type="match status" value="1"/>
</dbReference>
<dbReference type="PROSITE" id="PS51706">
    <property type="entry name" value="G_ENGB"/>
    <property type="match status" value="1"/>
</dbReference>
<accession>B8CVL3</accession>
<feature type="chain" id="PRO_1000119596" description="Probable GTP-binding protein EngB">
    <location>
        <begin position="1"/>
        <end position="224"/>
    </location>
</feature>
<feature type="domain" description="EngB-type G" evidence="1">
    <location>
        <begin position="31"/>
        <end position="204"/>
    </location>
</feature>
<feature type="binding site" evidence="1">
    <location>
        <begin position="39"/>
        <end position="46"/>
    </location>
    <ligand>
        <name>GTP</name>
        <dbReference type="ChEBI" id="CHEBI:37565"/>
    </ligand>
</feature>
<feature type="binding site" evidence="1">
    <location>
        <position position="46"/>
    </location>
    <ligand>
        <name>Mg(2+)</name>
        <dbReference type="ChEBI" id="CHEBI:18420"/>
    </ligand>
</feature>
<feature type="binding site" evidence="1">
    <location>
        <begin position="65"/>
        <end position="69"/>
    </location>
    <ligand>
        <name>GTP</name>
        <dbReference type="ChEBI" id="CHEBI:37565"/>
    </ligand>
</feature>
<feature type="binding site" evidence="1">
    <location>
        <position position="67"/>
    </location>
    <ligand>
        <name>Mg(2+)</name>
        <dbReference type="ChEBI" id="CHEBI:18420"/>
    </ligand>
</feature>
<feature type="binding site" evidence="1">
    <location>
        <begin position="83"/>
        <end position="86"/>
    </location>
    <ligand>
        <name>GTP</name>
        <dbReference type="ChEBI" id="CHEBI:37565"/>
    </ligand>
</feature>
<feature type="binding site" evidence="1">
    <location>
        <begin position="150"/>
        <end position="153"/>
    </location>
    <ligand>
        <name>GTP</name>
        <dbReference type="ChEBI" id="CHEBI:37565"/>
    </ligand>
</feature>
<feature type="binding site" evidence="1">
    <location>
        <begin position="183"/>
        <end position="185"/>
    </location>
    <ligand>
        <name>GTP</name>
        <dbReference type="ChEBI" id="CHEBI:37565"/>
    </ligand>
</feature>
<sequence length="224" mass="25017">MSESRIDFRKAEFLISAPDIAHLNEYLPGDVGVEIAFAGRSNAGKSSALNLLTEQKIARTSKTPGRTQLINVFKLDKHRRLVDLPGYGFAQVPLALKKKWQQALGEYLLKRECLSGVVVLMDIRHPLKDLDMQMIEWAVESDIPVLALLTKADKLGQSARMKMVNEVRKKLSNFDDAVKVEAFSSLKGIGKGKVLGILDQWCKPEWLQEQLTAESIEAQIESGK</sequence>
<proteinExistence type="inferred from homology"/>
<keyword id="KW-0131">Cell cycle</keyword>
<keyword id="KW-0132">Cell division</keyword>
<keyword id="KW-0342">GTP-binding</keyword>
<keyword id="KW-0460">Magnesium</keyword>
<keyword id="KW-0479">Metal-binding</keyword>
<keyword id="KW-0547">Nucleotide-binding</keyword>
<keyword id="KW-0717">Septation</keyword>